<name>RL30E_METS3</name>
<proteinExistence type="inferred from homology"/>
<sequence length="99" mass="10612">MMDVDRSIRVAVDTGDVTLGSEKSIQSLKLGKGQLVIVAANTPKDIVEDVEYYTNLSDIPSYTYEGSSVELGSVCGKPFTVATLIVNDPGDSTILDDLR</sequence>
<comment type="similarity">
    <text evidence="1">Belongs to the eukaryotic ribosomal protein eL30 family.</text>
</comment>
<gene>
    <name evidence="1" type="primary">rpl30e</name>
    <name type="ordered locus">Msm_0907</name>
</gene>
<evidence type="ECO:0000255" key="1">
    <source>
        <dbReference type="HAMAP-Rule" id="MF_00481"/>
    </source>
</evidence>
<evidence type="ECO:0000305" key="2"/>
<accession>A5ULN4</accession>
<keyword id="KW-0687">Ribonucleoprotein</keyword>
<keyword id="KW-0689">Ribosomal protein</keyword>
<dbReference type="EMBL" id="CP000678">
    <property type="protein sequence ID" value="ABQ87112.1"/>
    <property type="molecule type" value="Genomic_DNA"/>
</dbReference>
<dbReference type="SMR" id="A5ULN4"/>
<dbReference type="STRING" id="420247.Msm_0907"/>
<dbReference type="EnsemblBacteria" id="ABQ87112">
    <property type="protein sequence ID" value="ABQ87112"/>
    <property type="gene ID" value="Msm_0907"/>
</dbReference>
<dbReference type="KEGG" id="msi:Msm_0907"/>
<dbReference type="PATRIC" id="fig|420247.28.peg.904"/>
<dbReference type="eggNOG" id="arCOG01752">
    <property type="taxonomic scope" value="Archaea"/>
</dbReference>
<dbReference type="HOGENOM" id="CLU_130502_1_0_2"/>
<dbReference type="Proteomes" id="UP000001992">
    <property type="component" value="Chromosome"/>
</dbReference>
<dbReference type="GO" id="GO:0022625">
    <property type="term" value="C:cytosolic large ribosomal subunit"/>
    <property type="evidence" value="ECO:0007669"/>
    <property type="project" value="InterPro"/>
</dbReference>
<dbReference type="GO" id="GO:0003723">
    <property type="term" value="F:RNA binding"/>
    <property type="evidence" value="ECO:0007669"/>
    <property type="project" value="InterPro"/>
</dbReference>
<dbReference type="GO" id="GO:0003735">
    <property type="term" value="F:structural constituent of ribosome"/>
    <property type="evidence" value="ECO:0007669"/>
    <property type="project" value="InterPro"/>
</dbReference>
<dbReference type="GO" id="GO:0006412">
    <property type="term" value="P:translation"/>
    <property type="evidence" value="ECO:0007669"/>
    <property type="project" value="UniProtKB-UniRule"/>
</dbReference>
<dbReference type="Gene3D" id="3.30.1330.30">
    <property type="match status" value="1"/>
</dbReference>
<dbReference type="HAMAP" id="MF_00481">
    <property type="entry name" value="Ribosomal_eL30"/>
    <property type="match status" value="1"/>
</dbReference>
<dbReference type="InterPro" id="IPR000231">
    <property type="entry name" value="Ribosomal_eL30"/>
</dbReference>
<dbReference type="InterPro" id="IPR039109">
    <property type="entry name" value="Ribosomal_eL30-like"/>
</dbReference>
<dbReference type="InterPro" id="IPR029064">
    <property type="entry name" value="Ribosomal_eL30-like_sf"/>
</dbReference>
<dbReference type="InterPro" id="IPR022991">
    <property type="entry name" value="Ribosomal_eL30_CS"/>
</dbReference>
<dbReference type="InterPro" id="IPR004038">
    <property type="entry name" value="Ribosomal_eL8/eL30/eS12/Gad45"/>
</dbReference>
<dbReference type="NCBIfam" id="NF002172">
    <property type="entry name" value="PRK01018.1"/>
    <property type="match status" value="1"/>
</dbReference>
<dbReference type="PANTHER" id="PTHR11449">
    <property type="entry name" value="RIBOSOMAL PROTEIN L30"/>
    <property type="match status" value="1"/>
</dbReference>
<dbReference type="Pfam" id="PF01248">
    <property type="entry name" value="Ribosomal_L7Ae"/>
    <property type="match status" value="1"/>
</dbReference>
<dbReference type="SUPFAM" id="SSF55315">
    <property type="entry name" value="L30e-like"/>
    <property type="match status" value="1"/>
</dbReference>
<dbReference type="PROSITE" id="PS00993">
    <property type="entry name" value="RIBOSOMAL_L30E_2"/>
    <property type="match status" value="1"/>
</dbReference>
<protein>
    <recommendedName>
        <fullName evidence="1">Large ribosomal subunit protein eL30</fullName>
    </recommendedName>
    <alternativeName>
        <fullName evidence="2">50S ribosomal protein L30e</fullName>
    </alternativeName>
</protein>
<feature type="chain" id="PRO_1000072412" description="Large ribosomal subunit protein eL30">
    <location>
        <begin position="1"/>
        <end position="99"/>
    </location>
</feature>
<organism>
    <name type="scientific">Methanobrevibacter smithii (strain ATCC 35061 / DSM 861 / OCM 144 / PS)</name>
    <dbReference type="NCBI Taxonomy" id="420247"/>
    <lineage>
        <taxon>Archaea</taxon>
        <taxon>Methanobacteriati</taxon>
        <taxon>Methanobacteriota</taxon>
        <taxon>Methanomada group</taxon>
        <taxon>Methanobacteria</taxon>
        <taxon>Methanobacteriales</taxon>
        <taxon>Methanobacteriaceae</taxon>
        <taxon>Methanobrevibacter</taxon>
    </lineage>
</organism>
<reference key="1">
    <citation type="journal article" date="2007" name="Proc. Natl. Acad. Sci. U.S.A.">
        <title>Genomic and metabolic adaptations of Methanobrevibacter smithii to the human gut.</title>
        <authorList>
            <person name="Samuel B.S."/>
            <person name="Hansen E.E."/>
            <person name="Manchester J.K."/>
            <person name="Coutinho P.M."/>
            <person name="Henrissat B."/>
            <person name="Fulton R."/>
            <person name="Latreille P."/>
            <person name="Kim K."/>
            <person name="Wilson R.K."/>
            <person name="Gordon J.I."/>
        </authorList>
    </citation>
    <scope>NUCLEOTIDE SEQUENCE [LARGE SCALE GENOMIC DNA]</scope>
    <source>
        <strain>ATCC 35061 / DSM 861 / OCM 144 / PS</strain>
    </source>
</reference>